<proteinExistence type="inferred from homology"/>
<keyword id="KW-0143">Chaperone</keyword>
<keyword id="KW-0963">Cytoplasm</keyword>
<keyword id="KW-0346">Stress response</keyword>
<dbReference type="EMBL" id="CU928162">
    <property type="protein sequence ID" value="CAR10362.1"/>
    <property type="molecule type" value="Genomic_DNA"/>
</dbReference>
<dbReference type="RefSeq" id="WP_001243437.1">
    <property type="nucleotide sequence ID" value="NC_011745.1"/>
</dbReference>
<dbReference type="SMR" id="B7N1Z1"/>
<dbReference type="GeneID" id="93778428"/>
<dbReference type="KEGG" id="ecq:ECED1_4378"/>
<dbReference type="HOGENOM" id="CLU_046737_4_2_6"/>
<dbReference type="Proteomes" id="UP000000748">
    <property type="component" value="Chromosome"/>
</dbReference>
<dbReference type="GO" id="GO:0005737">
    <property type="term" value="C:cytoplasm"/>
    <property type="evidence" value="ECO:0007669"/>
    <property type="project" value="UniProtKB-SubCell"/>
</dbReference>
<dbReference type="GO" id="GO:0050821">
    <property type="term" value="P:protein stabilization"/>
    <property type="evidence" value="ECO:0007669"/>
    <property type="project" value="UniProtKB-UniRule"/>
</dbReference>
<dbReference type="CDD" id="cd06470">
    <property type="entry name" value="ACD_IbpA-B_like"/>
    <property type="match status" value="1"/>
</dbReference>
<dbReference type="FunFam" id="2.60.40.790:FF:000002">
    <property type="entry name" value="Small heat shock protein IbpA"/>
    <property type="match status" value="1"/>
</dbReference>
<dbReference type="Gene3D" id="2.60.40.790">
    <property type="match status" value="1"/>
</dbReference>
<dbReference type="HAMAP" id="MF_02000">
    <property type="entry name" value="HSP20_IbpA"/>
    <property type="match status" value="1"/>
</dbReference>
<dbReference type="InterPro" id="IPR002068">
    <property type="entry name" value="A-crystallin/Hsp20_dom"/>
</dbReference>
<dbReference type="InterPro" id="IPR037913">
    <property type="entry name" value="ACD_IbpA/B"/>
</dbReference>
<dbReference type="InterPro" id="IPR008978">
    <property type="entry name" value="HSP20-like_chaperone"/>
</dbReference>
<dbReference type="InterPro" id="IPR023728">
    <property type="entry name" value="HSP20_IbpA"/>
</dbReference>
<dbReference type="NCBIfam" id="NF008013">
    <property type="entry name" value="PRK10743.1"/>
    <property type="match status" value="1"/>
</dbReference>
<dbReference type="PANTHER" id="PTHR47062">
    <property type="match status" value="1"/>
</dbReference>
<dbReference type="PANTHER" id="PTHR47062:SF1">
    <property type="entry name" value="SMALL HEAT SHOCK PROTEIN IBPA"/>
    <property type="match status" value="1"/>
</dbReference>
<dbReference type="Pfam" id="PF00011">
    <property type="entry name" value="HSP20"/>
    <property type="match status" value="1"/>
</dbReference>
<dbReference type="SUPFAM" id="SSF49764">
    <property type="entry name" value="HSP20-like chaperones"/>
    <property type="match status" value="1"/>
</dbReference>
<dbReference type="PROSITE" id="PS01031">
    <property type="entry name" value="SHSP"/>
    <property type="match status" value="1"/>
</dbReference>
<feature type="chain" id="PRO_1000189081" description="Small heat shock protein IbpA">
    <location>
        <begin position="1"/>
        <end position="137"/>
    </location>
</feature>
<feature type="domain" description="sHSP" evidence="2">
    <location>
        <begin position="28"/>
        <end position="137"/>
    </location>
</feature>
<organism>
    <name type="scientific">Escherichia coli O81 (strain ED1a)</name>
    <dbReference type="NCBI Taxonomy" id="585397"/>
    <lineage>
        <taxon>Bacteria</taxon>
        <taxon>Pseudomonadati</taxon>
        <taxon>Pseudomonadota</taxon>
        <taxon>Gammaproteobacteria</taxon>
        <taxon>Enterobacterales</taxon>
        <taxon>Enterobacteriaceae</taxon>
        <taxon>Escherichia</taxon>
    </lineage>
</organism>
<comment type="function">
    <text evidence="1">Associates with aggregated proteins, together with IbpB, to stabilize and protect them from irreversible denaturation and extensive proteolysis during heat shock and oxidative stress. Aggregated proteins bound to the IbpAB complex are more efficiently refolded and reactivated by the ATP-dependent chaperone systems ClpB and DnaK/DnaJ/GrpE. Its activity is ATP-independent.</text>
</comment>
<comment type="subunit">
    <text evidence="1">Monomer. Forms homomultimers of about 100-150 subunits at optimal growth temperatures. Conformation changes to monomers at high temperatures or high ionic concentrations.</text>
</comment>
<comment type="subcellular location">
    <subcellularLocation>
        <location evidence="1">Cytoplasm</location>
    </subcellularLocation>
</comment>
<comment type="similarity">
    <text evidence="1 2">Belongs to the small heat shock protein (HSP20) family.</text>
</comment>
<reference key="1">
    <citation type="journal article" date="2009" name="PLoS Genet.">
        <title>Organised genome dynamics in the Escherichia coli species results in highly diverse adaptive paths.</title>
        <authorList>
            <person name="Touchon M."/>
            <person name="Hoede C."/>
            <person name="Tenaillon O."/>
            <person name="Barbe V."/>
            <person name="Baeriswyl S."/>
            <person name="Bidet P."/>
            <person name="Bingen E."/>
            <person name="Bonacorsi S."/>
            <person name="Bouchier C."/>
            <person name="Bouvet O."/>
            <person name="Calteau A."/>
            <person name="Chiapello H."/>
            <person name="Clermont O."/>
            <person name="Cruveiller S."/>
            <person name="Danchin A."/>
            <person name="Diard M."/>
            <person name="Dossat C."/>
            <person name="Karoui M.E."/>
            <person name="Frapy E."/>
            <person name="Garry L."/>
            <person name="Ghigo J.M."/>
            <person name="Gilles A.M."/>
            <person name="Johnson J."/>
            <person name="Le Bouguenec C."/>
            <person name="Lescat M."/>
            <person name="Mangenot S."/>
            <person name="Martinez-Jehanne V."/>
            <person name="Matic I."/>
            <person name="Nassif X."/>
            <person name="Oztas S."/>
            <person name="Petit M.A."/>
            <person name="Pichon C."/>
            <person name="Rouy Z."/>
            <person name="Ruf C.S."/>
            <person name="Schneider D."/>
            <person name="Tourret J."/>
            <person name="Vacherie B."/>
            <person name="Vallenet D."/>
            <person name="Medigue C."/>
            <person name="Rocha E.P.C."/>
            <person name="Denamur E."/>
        </authorList>
    </citation>
    <scope>NUCLEOTIDE SEQUENCE [LARGE SCALE GENOMIC DNA]</scope>
    <source>
        <strain>ED1a</strain>
    </source>
</reference>
<gene>
    <name evidence="1" type="primary">ibpA</name>
    <name type="ordered locus">ECED1_4378</name>
</gene>
<accession>B7N1Z1</accession>
<name>IBPA_ECO81</name>
<protein>
    <recommendedName>
        <fullName evidence="1">Small heat shock protein IbpA</fullName>
    </recommendedName>
    <alternativeName>
        <fullName evidence="1">16 kDa heat shock protein A</fullName>
    </alternativeName>
</protein>
<sequence>MRNFDLSPLYRSAIGFDRLFNHLENNQSQSNGGYPPYNVELVDENHYRIAIAVAGFAESELEITAQDNLLVVKGAHADEQKERTYLYQGIAERNFERKFQLAENIHVRGANLVNGLLYIDLERVIPEAKKPRRIEIN</sequence>
<evidence type="ECO:0000255" key="1">
    <source>
        <dbReference type="HAMAP-Rule" id="MF_02000"/>
    </source>
</evidence>
<evidence type="ECO:0000255" key="2">
    <source>
        <dbReference type="PROSITE-ProRule" id="PRU00285"/>
    </source>
</evidence>